<sequence length="1026" mass="111064">MRFFALFIYRPVATILIAAAITLCGILGFRLLPVAPLPQVDFPVIMVSASLPGASPETMASSVATPLERSLGRIAGVNEMTSSSSLGSTRIILEFNFDRDINGAARDVQAAINAAQSLLPGGMPSRPTYRKANPSDAPIMILTLTSESWSQGKLYDFASTQLAQTIAQIDGVGDVDVGGSSLPAVRVGLNPQALFNQGVSLDEVREAIDSANVRRPQGAIEDSVHRWQIQTNDELKTAAEYQPLIIHYNNGAAVRLGDVASVTDSVQDVRNAGMTNAKPAILLMIRKLPEANIIQTVDGIRAKLPELRAMIPAAIDLQIAQDRSPTIRASLQEVEETLAISVALVILVVFLFLRSGRATLIPAVAVPVSLIGTFAAMYLCGFSLNNLSLMALTIATGFVVDDAIVVLENIARHLEAGMKPLQAALQGTREVGFTVISMSLSLVAVFLPLLLMGGLPGRLLREFAVTLSVAIGISLVVSLTLTPMMCGWMLKSSKPRTQQRKRGVGRLLVALQQGYGTSLKWVLNHTRLVGVVFLGTVALNIWLYIAIPKTFFPEQDTGVLMGGIQADQSISFQAMRGKLQDFMKIIRDDPAVNNVTGFTGGSRVNSGMMFITLKPRGERKETAQQVIDRLRVKLAKEPGARLFLMAVQDIRVGGRQANASYQYTLLSDSLAALREWEPKIRKALSALPQLADVNSDQQDNGAEMNLIYDRDTMSRLGIDVQAANSLLNNAFGQRQISTIYQPMNQYKVVMEVDPRYTQDISALEKMFVINRDGKAIPLSYFAQWRPANAPLSVNHQGLSAASTIAFNLPTGTSLSQATEAINRTMTQLGVPPTVRGSFSGTAQVFQQTMNSQLILIVAAIATVYIVLGILYESYVHPLTILSTLPSAGVGALLALELFNAPFSLIALIGIMLLIGIVKKNAIMMVDFALEAQRSGGLTPEQAIFQACLLRFRPIMMTTLAALFGALPLVLSDGDGSELRQPLGITIVGGLVMSQLLTLYTTPVVYLFFDRLRLRFSRKNSKPVVEI</sequence>
<proteinExistence type="inferred from homology"/>
<feature type="chain" id="PRO_1000087418" description="Multidrug resistance protein MdtC">
    <location>
        <begin position="1"/>
        <end position="1026"/>
    </location>
</feature>
<feature type="transmembrane region" description="Helical" evidence="1">
    <location>
        <begin position="15"/>
        <end position="35"/>
    </location>
</feature>
<feature type="transmembrane region" description="Helical" evidence="1">
    <location>
        <begin position="333"/>
        <end position="353"/>
    </location>
</feature>
<feature type="transmembrane region" description="Helical" evidence="1">
    <location>
        <begin position="360"/>
        <end position="380"/>
    </location>
</feature>
<feature type="transmembrane region" description="Helical" evidence="1">
    <location>
        <begin position="387"/>
        <end position="407"/>
    </location>
</feature>
<feature type="transmembrane region" description="Helical" evidence="1">
    <location>
        <begin position="431"/>
        <end position="451"/>
    </location>
</feature>
<feature type="transmembrane region" description="Helical" evidence="1">
    <location>
        <begin position="463"/>
        <end position="483"/>
    </location>
</feature>
<feature type="transmembrane region" description="Helical" evidence="1">
    <location>
        <begin position="528"/>
        <end position="548"/>
    </location>
</feature>
<feature type="transmembrane region" description="Helical" evidence="1">
    <location>
        <begin position="853"/>
        <end position="873"/>
    </location>
</feature>
<feature type="transmembrane region" description="Helical" evidence="1">
    <location>
        <begin position="897"/>
        <end position="917"/>
    </location>
</feature>
<feature type="transmembrane region" description="Helical" evidence="1">
    <location>
        <begin position="953"/>
        <end position="973"/>
    </location>
</feature>
<feature type="transmembrane region" description="Helical" evidence="1">
    <location>
        <begin position="984"/>
        <end position="1004"/>
    </location>
</feature>
<dbReference type="EMBL" id="CP000886">
    <property type="protein sequence ID" value="ABX66319.1"/>
    <property type="molecule type" value="Genomic_DNA"/>
</dbReference>
<dbReference type="RefSeq" id="WP_001210084.1">
    <property type="nucleotide sequence ID" value="NC_010102.1"/>
</dbReference>
<dbReference type="SMR" id="A9N7L1"/>
<dbReference type="KEGG" id="spq:SPAB_00896"/>
<dbReference type="PATRIC" id="fig|1016998.12.peg.841"/>
<dbReference type="HOGENOM" id="CLU_002755_1_2_6"/>
<dbReference type="BioCyc" id="SENT1016998:SPAB_RS03705-MONOMER"/>
<dbReference type="Proteomes" id="UP000008556">
    <property type="component" value="Chromosome"/>
</dbReference>
<dbReference type="GO" id="GO:0005886">
    <property type="term" value="C:plasma membrane"/>
    <property type="evidence" value="ECO:0007669"/>
    <property type="project" value="UniProtKB-SubCell"/>
</dbReference>
<dbReference type="GO" id="GO:0042910">
    <property type="term" value="F:xenobiotic transmembrane transporter activity"/>
    <property type="evidence" value="ECO:0007669"/>
    <property type="project" value="TreeGrafter"/>
</dbReference>
<dbReference type="FunFam" id="1.20.1640.10:FF:000001">
    <property type="entry name" value="Efflux pump membrane transporter"/>
    <property type="match status" value="1"/>
</dbReference>
<dbReference type="FunFam" id="3.30.70.1430:FF:000001">
    <property type="entry name" value="Efflux pump membrane transporter"/>
    <property type="match status" value="1"/>
</dbReference>
<dbReference type="FunFam" id="3.30.2090.10:FF:000004">
    <property type="entry name" value="Multidrug resistance protein MdtC"/>
    <property type="match status" value="1"/>
</dbReference>
<dbReference type="FunFam" id="3.30.2090.10:FF:000005">
    <property type="entry name" value="Multidrug resistance protein MdtC"/>
    <property type="match status" value="1"/>
</dbReference>
<dbReference type="FunFam" id="3.30.70.1430:FF:000004">
    <property type="entry name" value="Multidrug resistance protein MdtC"/>
    <property type="match status" value="1"/>
</dbReference>
<dbReference type="Gene3D" id="3.30.70.1430">
    <property type="entry name" value="Multidrug efflux transporter AcrB pore domain"/>
    <property type="match status" value="2"/>
</dbReference>
<dbReference type="Gene3D" id="3.30.70.1440">
    <property type="entry name" value="Multidrug efflux transporter AcrB pore domain"/>
    <property type="match status" value="1"/>
</dbReference>
<dbReference type="Gene3D" id="3.30.70.1320">
    <property type="entry name" value="Multidrug efflux transporter AcrB pore domain like"/>
    <property type="match status" value="1"/>
</dbReference>
<dbReference type="Gene3D" id="3.30.2090.10">
    <property type="entry name" value="Multidrug efflux transporter AcrB TolC docking domain, DN and DC subdomains"/>
    <property type="match status" value="2"/>
</dbReference>
<dbReference type="Gene3D" id="1.20.1640.10">
    <property type="entry name" value="Multidrug efflux transporter AcrB transmembrane domain"/>
    <property type="match status" value="2"/>
</dbReference>
<dbReference type="HAMAP" id="MF_01424">
    <property type="entry name" value="MdtC"/>
    <property type="match status" value="1"/>
</dbReference>
<dbReference type="InterPro" id="IPR027463">
    <property type="entry name" value="AcrB_DN_DC_subdom"/>
</dbReference>
<dbReference type="InterPro" id="IPR001036">
    <property type="entry name" value="Acrflvin-R"/>
</dbReference>
<dbReference type="InterPro" id="IPR023931">
    <property type="entry name" value="Multidrug-R_MdtC"/>
</dbReference>
<dbReference type="NCBIfam" id="NF007905">
    <property type="entry name" value="PRK10614.1"/>
    <property type="match status" value="1"/>
</dbReference>
<dbReference type="NCBIfam" id="NF033617">
    <property type="entry name" value="RND_permease_2"/>
    <property type="match status" value="1"/>
</dbReference>
<dbReference type="PANTHER" id="PTHR32063">
    <property type="match status" value="1"/>
</dbReference>
<dbReference type="PANTHER" id="PTHR32063:SF34">
    <property type="entry name" value="MULTIDRUG RESISTANCE PROTEIN MDTC"/>
    <property type="match status" value="1"/>
</dbReference>
<dbReference type="Pfam" id="PF00873">
    <property type="entry name" value="ACR_tran"/>
    <property type="match status" value="1"/>
</dbReference>
<dbReference type="PRINTS" id="PR00702">
    <property type="entry name" value="ACRIFLAVINRP"/>
</dbReference>
<dbReference type="SUPFAM" id="SSF82693">
    <property type="entry name" value="Multidrug efflux transporter AcrB pore domain, PN1, PN2, PC1 and PC2 subdomains"/>
    <property type="match status" value="4"/>
</dbReference>
<dbReference type="SUPFAM" id="SSF82714">
    <property type="entry name" value="Multidrug efflux transporter AcrB TolC docking domain, DN and DC subdomains"/>
    <property type="match status" value="2"/>
</dbReference>
<dbReference type="SUPFAM" id="SSF82866">
    <property type="entry name" value="Multidrug efflux transporter AcrB transmembrane domain"/>
    <property type="match status" value="2"/>
</dbReference>
<comment type="subunit">
    <text evidence="1">Part of a tripartite efflux system composed of MdtA, MdtB and MdtC. MdtC forms a heteromultimer with MdtB.</text>
</comment>
<comment type="subcellular location">
    <subcellularLocation>
        <location evidence="1">Cell inner membrane</location>
        <topology evidence="1">Multi-pass membrane protein</topology>
    </subcellularLocation>
</comment>
<comment type="similarity">
    <text evidence="1">Belongs to the resistance-nodulation-cell division (RND) (TC 2.A.6) family. MdtC subfamily.</text>
</comment>
<name>MDTC_SALPB</name>
<evidence type="ECO:0000255" key="1">
    <source>
        <dbReference type="HAMAP-Rule" id="MF_01424"/>
    </source>
</evidence>
<protein>
    <recommendedName>
        <fullName evidence="1">Multidrug resistance protein MdtC</fullName>
    </recommendedName>
    <alternativeName>
        <fullName evidence="1">Multidrug transporter MdtC</fullName>
    </alternativeName>
</protein>
<organism>
    <name type="scientific">Salmonella paratyphi B (strain ATCC BAA-1250 / SPB7)</name>
    <dbReference type="NCBI Taxonomy" id="1016998"/>
    <lineage>
        <taxon>Bacteria</taxon>
        <taxon>Pseudomonadati</taxon>
        <taxon>Pseudomonadota</taxon>
        <taxon>Gammaproteobacteria</taxon>
        <taxon>Enterobacterales</taxon>
        <taxon>Enterobacteriaceae</taxon>
        <taxon>Salmonella</taxon>
    </lineage>
</organism>
<accession>A9N7L1</accession>
<gene>
    <name evidence="1" type="primary">mdtC</name>
    <name type="ordered locus">SPAB_00896</name>
</gene>
<keyword id="KW-0997">Cell inner membrane</keyword>
<keyword id="KW-1003">Cell membrane</keyword>
<keyword id="KW-0472">Membrane</keyword>
<keyword id="KW-0812">Transmembrane</keyword>
<keyword id="KW-1133">Transmembrane helix</keyword>
<keyword id="KW-0813">Transport</keyword>
<reference key="1">
    <citation type="submission" date="2007-11" db="EMBL/GenBank/DDBJ databases">
        <authorList>
            <consortium name="The Salmonella enterica serovar Paratyphi B Genome Sequencing Project"/>
            <person name="McClelland M."/>
            <person name="Sanderson E.K."/>
            <person name="Porwollik S."/>
            <person name="Spieth J."/>
            <person name="Clifton W.S."/>
            <person name="Fulton R."/>
            <person name="Cordes M."/>
            <person name="Wollam A."/>
            <person name="Shah N."/>
            <person name="Pepin K."/>
            <person name="Bhonagiri V."/>
            <person name="Nash W."/>
            <person name="Johnson M."/>
            <person name="Thiruvilangam P."/>
            <person name="Wilson R."/>
        </authorList>
    </citation>
    <scope>NUCLEOTIDE SEQUENCE [LARGE SCALE GENOMIC DNA]</scope>
    <source>
        <strain>ATCC BAA-1250 / SPB7</strain>
    </source>
</reference>